<name>GSPG_XANCP</name>
<organism>
    <name type="scientific">Xanthomonas campestris pv. campestris (strain ATCC 33913 / DSM 3586 / NCPPB 528 / LMG 568 / P 25)</name>
    <dbReference type="NCBI Taxonomy" id="190485"/>
    <lineage>
        <taxon>Bacteria</taxon>
        <taxon>Pseudomonadati</taxon>
        <taxon>Pseudomonadota</taxon>
        <taxon>Gammaproteobacteria</taxon>
        <taxon>Lysobacterales</taxon>
        <taxon>Lysobacteraceae</taxon>
        <taxon>Xanthomonas</taxon>
    </lineage>
</organism>
<accession>P31734</accession>
<feature type="propeptide" id="PRO_0000449510" description="Leader sequence" evidence="3">
    <location>
        <begin position="1"/>
        <end position="17"/>
    </location>
</feature>
<feature type="chain" id="PRO_0000024213" description="Type II secretion system core protein G">
    <location>
        <begin position="18"/>
        <end position="143"/>
    </location>
</feature>
<feature type="transmembrane region" description="Helical" evidence="2">
    <location>
        <begin position="18"/>
        <end position="38"/>
    </location>
</feature>
<feature type="modified residue" description="N-methylmethionine" evidence="3">
    <location>
        <position position="18"/>
    </location>
</feature>
<protein>
    <recommendedName>
        <fullName>Type II secretion system core protein G</fullName>
        <shortName>T2SS core protein G</shortName>
    </recommendedName>
    <alternativeName>
        <fullName>General secretion pathway protein G</fullName>
    </alternativeName>
</protein>
<keyword id="KW-0997">Cell inner membrane</keyword>
<keyword id="KW-1003">Cell membrane</keyword>
<keyword id="KW-0472">Membrane</keyword>
<keyword id="KW-0488">Methylation</keyword>
<keyword id="KW-0653">Protein transport</keyword>
<keyword id="KW-1185">Reference proteome</keyword>
<keyword id="KW-0812">Transmembrane</keyword>
<keyword id="KW-1133">Transmembrane helix</keyword>
<keyword id="KW-0813">Transport</keyword>
<dbReference type="EMBL" id="X59079">
    <property type="protein sequence ID" value="CAA41805.1"/>
    <property type="molecule type" value="Genomic_DNA"/>
</dbReference>
<dbReference type="EMBL" id="L02630">
    <property type="protein sequence ID" value="AAC27377.1"/>
    <property type="molecule type" value="Genomic_DNA"/>
</dbReference>
<dbReference type="EMBL" id="AE008922">
    <property type="protein sequence ID" value="AAM39978.1"/>
    <property type="molecule type" value="Genomic_DNA"/>
</dbReference>
<dbReference type="PIR" id="S17939">
    <property type="entry name" value="S17939"/>
</dbReference>
<dbReference type="RefSeq" id="NP_636054.1">
    <property type="nucleotide sequence ID" value="NC_003902.1"/>
</dbReference>
<dbReference type="SMR" id="P31734"/>
<dbReference type="STRING" id="190485.XCC0662"/>
<dbReference type="EnsemblBacteria" id="AAM39978">
    <property type="protein sequence ID" value="AAM39978"/>
    <property type="gene ID" value="XCC0662"/>
</dbReference>
<dbReference type="KEGG" id="xcc:XCC0662"/>
<dbReference type="PATRIC" id="fig|190485.4.peg.727"/>
<dbReference type="eggNOG" id="COG2165">
    <property type="taxonomic scope" value="Bacteria"/>
</dbReference>
<dbReference type="HOGENOM" id="CLU_091705_2_0_6"/>
<dbReference type="OrthoDB" id="9795612at2"/>
<dbReference type="Proteomes" id="UP000001010">
    <property type="component" value="Chromosome"/>
</dbReference>
<dbReference type="GO" id="GO:0005886">
    <property type="term" value="C:plasma membrane"/>
    <property type="evidence" value="ECO:0007669"/>
    <property type="project" value="UniProtKB-SubCell"/>
</dbReference>
<dbReference type="GO" id="GO:0015627">
    <property type="term" value="C:type II protein secretion system complex"/>
    <property type="evidence" value="ECO:0007669"/>
    <property type="project" value="InterPro"/>
</dbReference>
<dbReference type="GO" id="GO:0015628">
    <property type="term" value="P:protein secretion by the type II secretion system"/>
    <property type="evidence" value="ECO:0007669"/>
    <property type="project" value="InterPro"/>
</dbReference>
<dbReference type="Gene3D" id="3.30.700.10">
    <property type="entry name" value="Glycoprotein, Type 4 Pilin"/>
    <property type="match status" value="1"/>
</dbReference>
<dbReference type="InterPro" id="IPR000983">
    <property type="entry name" value="Bac_GSPG_pilin"/>
</dbReference>
<dbReference type="InterPro" id="IPR012902">
    <property type="entry name" value="N_methyl_site"/>
</dbReference>
<dbReference type="InterPro" id="IPR045584">
    <property type="entry name" value="Pilin-like"/>
</dbReference>
<dbReference type="InterPro" id="IPR013545">
    <property type="entry name" value="T2SS_protein-GspG_C"/>
</dbReference>
<dbReference type="InterPro" id="IPR010054">
    <property type="entry name" value="Type2_sec_GspG"/>
</dbReference>
<dbReference type="NCBIfam" id="TIGR02532">
    <property type="entry name" value="IV_pilin_GFxxxE"/>
    <property type="match status" value="1"/>
</dbReference>
<dbReference type="NCBIfam" id="TIGR01710">
    <property type="entry name" value="typeII_sec_gspG"/>
    <property type="match status" value="1"/>
</dbReference>
<dbReference type="Pfam" id="PF08334">
    <property type="entry name" value="T2SSG"/>
    <property type="match status" value="1"/>
</dbReference>
<dbReference type="PRINTS" id="PR00813">
    <property type="entry name" value="BCTERIALGSPG"/>
</dbReference>
<dbReference type="SUPFAM" id="SSF54523">
    <property type="entry name" value="Pili subunits"/>
    <property type="match status" value="1"/>
</dbReference>
<dbReference type="PROSITE" id="PS00409">
    <property type="entry name" value="PROKAR_NTER_METHYL"/>
    <property type="match status" value="1"/>
</dbReference>
<sequence>MIKRSITRSPSRAGQAGMSLLEIIIVIVLIGAVLTLVGSRVLGGADRGKANLAKSQIQTLAGKIENFQLDTGKLPSKLDDLVTQPGGSSGWLGPYAKPVELNDPWGHTIEYRVPGDGQAFDLISLGKDGRPGGSSYDSDIKYQ</sequence>
<comment type="function">
    <text evidence="4 5 6">Core component of the type II secretion system required for the energy-dependent secretion of extracellular factors such as proteases and toxins from the periplasm (PubMed:15590656, PubMed:16078004). Pseudopilin (pilin-like) protein that polymerizes to form the pseudopilus (PubMed:11931643). Further polymerization triggers pseudopilus growth (PubMed:11931643).</text>
</comment>
<comment type="subunit">
    <text evidence="1 5 6">Type II secretion system is composed of four main components: the outer membrane complex, the inner membrane complex, the cytoplasmic secretion ATPase and the periplasm-spanning pseudopilus. Forms homomultimers (By similarity). Interacts with pseudopilin tip complex component XpsJ as well as XpsI and XcpH (PubMed:16078004). Interacts with XpsN and secretin XpsD (PubMed:15590656).</text>
</comment>
<comment type="subcellular location">
    <subcellularLocation>
        <location evidence="1">Cell inner membrane</location>
        <topology evidence="2">Single-pass membrane protein</topology>
    </subcellularLocation>
</comment>
<comment type="PTM">
    <text evidence="1">Cleaved by the prepilin peptidase.</text>
</comment>
<comment type="PTM">
    <text evidence="1">Methylated by prepilin peptidase at the amino group of the N-terminal methionine once the leader sequence is cleaved.</text>
</comment>
<comment type="disruption phenotype">
    <text evidence="4">Deletion mutants can no longer assemble into the pillar-like structure.</text>
</comment>
<comment type="similarity">
    <text evidence="7">Belongs to the GSP G family.</text>
</comment>
<reference key="1">
    <citation type="journal article" date="1991" name="Mol. Gen. Genet.">
        <title>Structural characterization of protein secretion genes of the bacterial phytopathogen Xanthomonas campestris pathovar campestris: relatedness to secretion systems of other Gram-negative bacteria.</title>
        <authorList>
            <person name="Dums F."/>
            <person name="Dow J.M."/>
            <person name="Daniels M.J."/>
        </authorList>
    </citation>
    <scope>NUCLEOTIDE SEQUENCE [GENOMIC DNA]</scope>
    <source>
        <strain>8000 NCPPB 1145</strain>
    </source>
</reference>
<reference key="2">
    <citation type="submission" date="1993-04" db="EMBL/GenBank/DDBJ databases">
        <authorList>
            <person name="Hu N.-T.T."/>
            <person name="Hung M.-N."/>
            <person name="Wang K.C."/>
        </authorList>
    </citation>
    <scope>NUCLEOTIDE SEQUENCE [GENOMIC DNA]</scope>
    <source>
        <strain>Xc1701</strain>
    </source>
</reference>
<reference key="3">
    <citation type="journal article" date="2002" name="Nature">
        <title>Comparison of the genomes of two Xanthomonas pathogens with differing host specificities.</title>
        <authorList>
            <person name="da Silva A.C.R."/>
            <person name="Ferro J.A."/>
            <person name="Reinach F.C."/>
            <person name="Farah C.S."/>
            <person name="Furlan L.R."/>
            <person name="Quaggio R.B."/>
            <person name="Monteiro-Vitorello C.B."/>
            <person name="Van Sluys M.A."/>
            <person name="Almeida N.F. Jr."/>
            <person name="Alves L.M.C."/>
            <person name="do Amaral A.M."/>
            <person name="Bertolini M.C."/>
            <person name="Camargo L.E.A."/>
            <person name="Camarotte G."/>
            <person name="Cannavan F."/>
            <person name="Cardozo J."/>
            <person name="Chambergo F."/>
            <person name="Ciapina L.P."/>
            <person name="Cicarelli R.M.B."/>
            <person name="Coutinho L.L."/>
            <person name="Cursino-Santos J.R."/>
            <person name="El-Dorry H."/>
            <person name="Faria J.B."/>
            <person name="Ferreira A.J.S."/>
            <person name="Ferreira R.C.C."/>
            <person name="Ferro M.I.T."/>
            <person name="Formighieri E.F."/>
            <person name="Franco M.C."/>
            <person name="Greggio C.C."/>
            <person name="Gruber A."/>
            <person name="Katsuyama A.M."/>
            <person name="Kishi L.T."/>
            <person name="Leite R.P."/>
            <person name="Lemos E.G.M."/>
            <person name="Lemos M.V.F."/>
            <person name="Locali E.C."/>
            <person name="Machado M.A."/>
            <person name="Madeira A.M.B.N."/>
            <person name="Martinez-Rossi N.M."/>
            <person name="Martins E.C."/>
            <person name="Meidanis J."/>
            <person name="Menck C.F.M."/>
            <person name="Miyaki C.Y."/>
            <person name="Moon D.H."/>
            <person name="Moreira L.M."/>
            <person name="Novo M.T.M."/>
            <person name="Okura V.K."/>
            <person name="Oliveira M.C."/>
            <person name="Oliveira V.R."/>
            <person name="Pereira H.A."/>
            <person name="Rossi A."/>
            <person name="Sena J.A.D."/>
            <person name="Silva C."/>
            <person name="de Souza R.F."/>
            <person name="Spinola L.A.F."/>
            <person name="Takita M.A."/>
            <person name="Tamura R.E."/>
            <person name="Teixeira E.C."/>
            <person name="Tezza R.I.D."/>
            <person name="Trindade dos Santos M."/>
            <person name="Truffi D."/>
            <person name="Tsai S.M."/>
            <person name="White F.F."/>
            <person name="Setubal J.C."/>
            <person name="Kitajima J.P."/>
        </authorList>
    </citation>
    <scope>NUCLEOTIDE SEQUENCE [LARGE SCALE GENOMIC DNA]</scope>
    <source>
        <strain>ATCC 33913 / DSM 3586 / NCPPB 528 / LMG 568 / P 25</strain>
    </source>
</reference>
<reference key="4">
    <citation type="journal article" date="2002" name="Biochem. J.">
        <title>XpsG, the major pseudopilin in Xanthomonas campestris pv. campestris, forms a pilus-like structure between cytoplasmic and outer membranes.</title>
        <authorList>
            <person name="Hu N.T."/>
            <person name="Leu W.M."/>
            <person name="Lee M.S."/>
            <person name="Chen A."/>
            <person name="Chen S.C."/>
            <person name="Song Y.L."/>
            <person name="Chen L.Y."/>
        </authorList>
    </citation>
    <scope>FUNCTION</scope>
    <scope>DISRUPTION PHENOTYPE</scope>
</reference>
<reference key="5">
    <citation type="journal article" date="2005" name="J. Biol. Chem.">
        <title>Associations of the major pseudopilin XpsG with XpsN (GspC) and secretin XpsD of Xanthomonas campestris pv. campestris type II secretion apparatus revealed by cross-linking analysis.</title>
        <authorList>
            <person name="Lee M.S."/>
            <person name="Chen L.Y."/>
            <person name="Leu W.M."/>
            <person name="Shiau R.J."/>
            <person name="Hu N.T."/>
        </authorList>
    </citation>
    <scope>FUNCTION</scope>
    <scope>INTERACTION WITH XPSN AND XPSD</scope>
</reference>
<reference key="6">
    <citation type="journal article" date="2005" name="J. Biomed. Sci.">
        <title>Roles of the minor pseudopilins, XpsH, XpsI and XpsJ, in the formation of XpsG-containing pseudopilus in Xanthomonas campestris pv. campestris.</title>
        <authorList>
            <person name="Kuo W.W."/>
            <person name="Kuo H.W."/>
            <person name="Cheng C.C."/>
            <person name="Lai H.L."/>
            <person name="Chen L.Y."/>
        </authorList>
    </citation>
    <scope>FUNCTION</scope>
    <scope>INTERACTION WITH XPSI; XPSJ AND XPSH</scope>
</reference>
<gene>
    <name type="primary">xpsG</name>
    <name type="synonym">pefG</name>
    <name type="ordered locus">XCC0662</name>
</gene>
<proteinExistence type="evidence at protein level"/>
<evidence type="ECO:0000250" key="1">
    <source>
        <dbReference type="UniProtKB" id="Q00514"/>
    </source>
</evidence>
<evidence type="ECO:0000255" key="2"/>
<evidence type="ECO:0000255" key="3">
    <source>
        <dbReference type="PROSITE-ProRule" id="PRU01070"/>
    </source>
</evidence>
<evidence type="ECO:0000269" key="4">
    <source>
    </source>
</evidence>
<evidence type="ECO:0000269" key="5">
    <source>
    </source>
</evidence>
<evidence type="ECO:0000269" key="6">
    <source>
    </source>
</evidence>
<evidence type="ECO:0000305" key="7"/>